<protein>
    <recommendedName>
        <fullName>Nuclear hormone receptor family member nhr-13</fullName>
    </recommendedName>
</protein>
<accession>Q9N4Q7</accession>
<accession>Q6F3C8</accession>
<evidence type="ECO:0000255" key="1">
    <source>
        <dbReference type="PROSITE-ProRule" id="PRU00407"/>
    </source>
</evidence>
<evidence type="ECO:0000255" key="2">
    <source>
        <dbReference type="PROSITE-ProRule" id="PRU01189"/>
    </source>
</evidence>
<evidence type="ECO:0000256" key="3">
    <source>
        <dbReference type="SAM" id="MobiDB-lite"/>
    </source>
</evidence>
<evidence type="ECO:0000269" key="4">
    <source>
    </source>
</evidence>
<evidence type="ECO:0000305" key="5"/>
<name>NHR13_CAEEL</name>
<gene>
    <name type="primary">nhr-13</name>
    <name type="ORF">Y5H2B.2</name>
</gene>
<organism>
    <name type="scientific">Caenorhabditis elegans</name>
    <dbReference type="NCBI Taxonomy" id="6239"/>
    <lineage>
        <taxon>Eukaryota</taxon>
        <taxon>Metazoa</taxon>
        <taxon>Ecdysozoa</taxon>
        <taxon>Nematoda</taxon>
        <taxon>Chromadorea</taxon>
        <taxon>Rhabditida</taxon>
        <taxon>Rhabditina</taxon>
        <taxon>Rhabditomorpha</taxon>
        <taxon>Rhabditoidea</taxon>
        <taxon>Rhabditidae</taxon>
        <taxon>Peloderinae</taxon>
        <taxon>Caenorhabditis</taxon>
    </lineage>
</organism>
<comment type="function">
    <text evidence="4">Orphan nuclear receptor (PubMed:22511885). Involved in regulating fatty acid desaturase genes, acting in concert with nuclear hormone receptor nhr-49 (PubMed:22511885).</text>
</comment>
<comment type="subunit">
    <text evidence="4">May interact with nuclear hormone receptor nhr-49.</text>
</comment>
<comment type="interaction">
    <interactant intactId="EBI-317894">
        <id>Q9N4Q7</id>
    </interactant>
    <interactant intactId="EBI-318820">
        <id>O45666</id>
        <label>nhr-49</label>
    </interactant>
    <organismsDiffer>false</organismsDiffer>
    <experiments>7</experiments>
</comment>
<comment type="subcellular location">
    <subcellularLocation>
        <location evidence="1">Nucleus</location>
    </subcellularLocation>
</comment>
<comment type="alternative products">
    <event type="alternative splicing"/>
    <isoform>
        <id>Q9N4Q7-1</id>
        <name>b</name>
        <sequence type="displayed"/>
    </isoform>
    <isoform>
        <id>Q9N4Q7-2</id>
        <name>a</name>
        <sequence type="described" ref="VSP_020172"/>
    </isoform>
</comment>
<comment type="similarity">
    <text evidence="5">Belongs to the nuclear hormone receptor family.</text>
</comment>
<dbReference type="EMBL" id="FO080876">
    <property type="protein sequence ID" value="CCD67432.1"/>
    <property type="molecule type" value="Genomic_DNA"/>
</dbReference>
<dbReference type="EMBL" id="FO080876">
    <property type="protein sequence ID" value="CCD67433.1"/>
    <property type="molecule type" value="Genomic_DNA"/>
</dbReference>
<dbReference type="RefSeq" id="NP_001024268.1">
    <molecule id="Q9N4Q7-2"/>
    <property type="nucleotide sequence ID" value="NM_001029097.6"/>
</dbReference>
<dbReference type="RefSeq" id="NP_001024269.1">
    <molecule id="Q9N4Q7-1"/>
    <property type="nucleotide sequence ID" value="NM_001029098.6"/>
</dbReference>
<dbReference type="SMR" id="Q9N4Q7"/>
<dbReference type="BioGRID" id="43757">
    <property type="interactions" value="5"/>
</dbReference>
<dbReference type="DIP" id="DIP-27077N"/>
<dbReference type="FunCoup" id="Q9N4Q7">
    <property type="interactions" value="1554"/>
</dbReference>
<dbReference type="IntAct" id="Q9N4Q7">
    <property type="interactions" value="2"/>
</dbReference>
<dbReference type="STRING" id="6239.Y5H2B.2b.2"/>
<dbReference type="PaxDb" id="6239-Y5H2B.2b"/>
<dbReference type="EnsemblMetazoa" id="Y5H2B.2a.1">
    <molecule id="Q9N4Q7-2"/>
    <property type="protein sequence ID" value="Y5H2B.2a.1"/>
    <property type="gene ID" value="WBGene00003612"/>
</dbReference>
<dbReference type="EnsemblMetazoa" id="Y5H2B.2b.1">
    <molecule id="Q9N4Q7-1"/>
    <property type="protein sequence ID" value="Y5H2B.2b.1"/>
    <property type="gene ID" value="WBGene00003612"/>
</dbReference>
<dbReference type="GeneID" id="178696"/>
<dbReference type="KEGG" id="cel:CELE_Y5H2B.2"/>
<dbReference type="UCSC" id="Y5H2B.2a">
    <molecule id="Q9N4Q7-1"/>
    <property type="organism name" value="c. elegans"/>
</dbReference>
<dbReference type="AGR" id="WB:WBGene00003612"/>
<dbReference type="CTD" id="178696"/>
<dbReference type="WormBase" id="Y5H2B.2a">
    <molecule id="Q9N4Q7-2"/>
    <property type="protein sequence ID" value="CE26221"/>
    <property type="gene ID" value="WBGene00003612"/>
    <property type="gene designation" value="nhr-13"/>
</dbReference>
<dbReference type="WormBase" id="Y5H2B.2b">
    <molecule id="Q9N4Q7-1"/>
    <property type="protein sequence ID" value="CE36963"/>
    <property type="gene ID" value="WBGene00003612"/>
    <property type="gene designation" value="nhr-13"/>
</dbReference>
<dbReference type="eggNOG" id="KOG3575">
    <property type="taxonomic scope" value="Eukaryota"/>
</dbReference>
<dbReference type="InParanoid" id="Q9N4Q7"/>
<dbReference type="OMA" id="MCDRRRL"/>
<dbReference type="OrthoDB" id="5793246at2759"/>
<dbReference type="PhylomeDB" id="Q9N4Q7"/>
<dbReference type="SignaLink" id="Q9N4Q7"/>
<dbReference type="PRO" id="PR:Q9N4Q7"/>
<dbReference type="Proteomes" id="UP000001940">
    <property type="component" value="Chromosome V"/>
</dbReference>
<dbReference type="Bgee" id="WBGene00003612">
    <property type="expression patterns" value="Expressed in embryo and 4 other cell types or tissues"/>
</dbReference>
<dbReference type="GO" id="GO:0005634">
    <property type="term" value="C:nucleus"/>
    <property type="evidence" value="ECO:0000318"/>
    <property type="project" value="GO_Central"/>
</dbReference>
<dbReference type="GO" id="GO:0003700">
    <property type="term" value="F:DNA-binding transcription factor activity"/>
    <property type="evidence" value="ECO:0007669"/>
    <property type="project" value="InterPro"/>
</dbReference>
<dbReference type="GO" id="GO:0043565">
    <property type="term" value="F:sequence-specific DNA binding"/>
    <property type="evidence" value="ECO:0007669"/>
    <property type="project" value="InterPro"/>
</dbReference>
<dbReference type="GO" id="GO:0008270">
    <property type="term" value="F:zinc ion binding"/>
    <property type="evidence" value="ECO:0007669"/>
    <property type="project" value="UniProtKB-KW"/>
</dbReference>
<dbReference type="CDD" id="cd06157">
    <property type="entry name" value="NR_LBD"/>
    <property type="match status" value="1"/>
</dbReference>
<dbReference type="Gene3D" id="3.30.50.10">
    <property type="entry name" value="Erythroid Transcription Factor GATA-1, subunit A"/>
    <property type="match status" value="1"/>
</dbReference>
<dbReference type="Gene3D" id="1.10.565.10">
    <property type="entry name" value="Retinoid X Receptor"/>
    <property type="match status" value="1"/>
</dbReference>
<dbReference type="InterPro" id="IPR035500">
    <property type="entry name" value="NHR-like_dom_sf"/>
</dbReference>
<dbReference type="InterPro" id="IPR000536">
    <property type="entry name" value="Nucl_hrmn_rcpt_lig-bd"/>
</dbReference>
<dbReference type="InterPro" id="IPR001628">
    <property type="entry name" value="Znf_hrmn_rcpt"/>
</dbReference>
<dbReference type="InterPro" id="IPR013088">
    <property type="entry name" value="Znf_NHR/GATA"/>
</dbReference>
<dbReference type="PANTHER" id="PTHR46397:SF3">
    <property type="entry name" value="NR LBD DOMAIN-CONTAINING PROTEIN-RELATED"/>
    <property type="match status" value="1"/>
</dbReference>
<dbReference type="PANTHER" id="PTHR46397">
    <property type="entry name" value="NUCLEAR HORMONE RECEPTOR FAMILY-RELATED"/>
    <property type="match status" value="1"/>
</dbReference>
<dbReference type="Pfam" id="PF00104">
    <property type="entry name" value="Hormone_recep"/>
    <property type="match status" value="1"/>
</dbReference>
<dbReference type="Pfam" id="PF00105">
    <property type="entry name" value="zf-C4"/>
    <property type="match status" value="1"/>
</dbReference>
<dbReference type="PRINTS" id="PR00047">
    <property type="entry name" value="STROIDFINGER"/>
</dbReference>
<dbReference type="SMART" id="SM00430">
    <property type="entry name" value="HOLI"/>
    <property type="match status" value="1"/>
</dbReference>
<dbReference type="SMART" id="SM00399">
    <property type="entry name" value="ZnF_C4"/>
    <property type="match status" value="1"/>
</dbReference>
<dbReference type="SUPFAM" id="SSF57716">
    <property type="entry name" value="Glucocorticoid receptor-like (DNA-binding domain)"/>
    <property type="match status" value="1"/>
</dbReference>
<dbReference type="SUPFAM" id="SSF48508">
    <property type="entry name" value="Nuclear receptor ligand-binding domain"/>
    <property type="match status" value="1"/>
</dbReference>
<dbReference type="PROSITE" id="PS51843">
    <property type="entry name" value="NR_LBD"/>
    <property type="match status" value="1"/>
</dbReference>
<dbReference type="PROSITE" id="PS00031">
    <property type="entry name" value="NUCLEAR_REC_DBD_1"/>
    <property type="match status" value="1"/>
</dbReference>
<dbReference type="PROSITE" id="PS51030">
    <property type="entry name" value="NUCLEAR_REC_DBD_2"/>
    <property type="match status" value="1"/>
</dbReference>
<keyword id="KW-0025">Alternative splicing</keyword>
<keyword id="KW-0238">DNA-binding</keyword>
<keyword id="KW-0479">Metal-binding</keyword>
<keyword id="KW-0539">Nucleus</keyword>
<keyword id="KW-0675">Receptor</keyword>
<keyword id="KW-1185">Reference proteome</keyword>
<keyword id="KW-0804">Transcription</keyword>
<keyword id="KW-0805">Transcription regulation</keyword>
<keyword id="KW-0862">Zinc</keyword>
<keyword id="KW-0863">Zinc-finger</keyword>
<proteinExistence type="evidence at protein level"/>
<feature type="chain" id="PRO_0000053766" description="Nuclear hormone receptor family member nhr-13">
    <location>
        <begin position="1"/>
        <end position="425"/>
    </location>
</feature>
<feature type="domain" description="NR LBD" evidence="2">
    <location>
        <begin position="147"/>
        <end position="414"/>
    </location>
</feature>
<feature type="DNA-binding region" description="Nuclear receptor" evidence="1">
    <location>
        <begin position="5"/>
        <end position="83"/>
    </location>
</feature>
<feature type="zinc finger region" description="NR C4-type" evidence="1">
    <location>
        <begin position="11"/>
        <end position="30"/>
    </location>
</feature>
<feature type="zinc finger region" description="NR C4-type" evidence="1">
    <location>
        <begin position="46"/>
        <end position="71"/>
    </location>
</feature>
<feature type="region of interest" description="Disordered" evidence="3">
    <location>
        <begin position="108"/>
        <end position="148"/>
    </location>
</feature>
<feature type="compositionally biased region" description="Acidic residues" evidence="3">
    <location>
        <begin position="113"/>
        <end position="130"/>
    </location>
</feature>
<feature type="compositionally biased region" description="Low complexity" evidence="3">
    <location>
        <begin position="131"/>
        <end position="142"/>
    </location>
</feature>
<feature type="splice variant" id="VSP_020172" description="In isoform a." evidence="5">
    <original>VNIRHVVSSFVMISFFGIINVDKSMISLTSFWNKSDTSTAPSL</original>
    <variation>EQIRHVNCSFVMISIFGILKVDSLMLDVTSFW</variation>
    <location>
        <begin position="383"/>
        <end position="425"/>
    </location>
</feature>
<sequence length="425" mass="48592">MPTNPNSCEVCSSSSNSSCNHFGARTCKACAAFFRRTVSMKLDYQCIDQPDACRVHCDSRVICRFCRLKKCHDIGMKPLLVKSKNERKNYIRISKGLIRKRSVLGDNVKENSEEIQNDDDPQESDAEMENESTPGPSSEPSENVSAENQETVTKFLKLEASMCDRRRLLYAETPISIVLESGKEWPYENAPLKMFDYKLSQGMSKHDFVMIMDYARGMPGFDEMNYADSVFCYRLVCAVDFVINSAYYTYKRGIEHNELVLSDGTFIPMVPTPLTGYEENANLLFQSQDDLMKFRTLMPLILHQWETCVPFAQLAPSHEEFCLLKAICVWHVSYYRLSEDGRRIAIAQRNRLIRALHHVCHLDSDDVGERFGNVMMALNYIMVNIRHVVSSFVMISFFGIINVDKSMISLTSFWNKSDTSTAPSL</sequence>
<reference key="1">
    <citation type="journal article" date="1998" name="Science">
        <title>Genome sequence of the nematode C. elegans: a platform for investigating biology.</title>
        <authorList>
            <consortium name="The C. elegans sequencing consortium"/>
        </authorList>
    </citation>
    <scope>NUCLEOTIDE SEQUENCE [LARGE SCALE GENOMIC DNA]</scope>
    <scope>ALTERNATIVE SPLICING</scope>
    <source>
        <strain>Bristol N2</strain>
    </source>
</reference>
<reference key="2">
    <citation type="journal article" date="2012" name="PLoS Genet.">
        <title>Coordinate regulation of lipid metabolism by novel nuclear receptor partnerships.</title>
        <authorList>
            <person name="Pathare P.P."/>
            <person name="Lin A."/>
            <person name="Bornfeldt K.E."/>
            <person name="Taubert S."/>
            <person name="Van Gilst M.R."/>
        </authorList>
    </citation>
    <scope>FUNCTION</scope>
    <scope>INTERACTION WITH NHR-49</scope>
</reference>